<reference key="1">
    <citation type="journal article" date="2004" name="Nature">
        <title>Genome evolution in yeasts.</title>
        <authorList>
            <person name="Dujon B."/>
            <person name="Sherman D."/>
            <person name="Fischer G."/>
            <person name="Durrens P."/>
            <person name="Casaregola S."/>
            <person name="Lafontaine I."/>
            <person name="de Montigny J."/>
            <person name="Marck C."/>
            <person name="Neuveglise C."/>
            <person name="Talla E."/>
            <person name="Goffard N."/>
            <person name="Frangeul L."/>
            <person name="Aigle M."/>
            <person name="Anthouard V."/>
            <person name="Babour A."/>
            <person name="Barbe V."/>
            <person name="Barnay S."/>
            <person name="Blanchin S."/>
            <person name="Beckerich J.-M."/>
            <person name="Beyne E."/>
            <person name="Bleykasten C."/>
            <person name="Boisrame A."/>
            <person name="Boyer J."/>
            <person name="Cattolico L."/>
            <person name="Confanioleri F."/>
            <person name="de Daruvar A."/>
            <person name="Despons L."/>
            <person name="Fabre E."/>
            <person name="Fairhead C."/>
            <person name="Ferry-Dumazet H."/>
            <person name="Groppi A."/>
            <person name="Hantraye F."/>
            <person name="Hennequin C."/>
            <person name="Jauniaux N."/>
            <person name="Joyet P."/>
            <person name="Kachouri R."/>
            <person name="Kerrest A."/>
            <person name="Koszul R."/>
            <person name="Lemaire M."/>
            <person name="Lesur I."/>
            <person name="Ma L."/>
            <person name="Muller H."/>
            <person name="Nicaud J.-M."/>
            <person name="Nikolski M."/>
            <person name="Oztas S."/>
            <person name="Ozier-Kalogeropoulos O."/>
            <person name="Pellenz S."/>
            <person name="Potier S."/>
            <person name="Richard G.-F."/>
            <person name="Straub M.-L."/>
            <person name="Suleau A."/>
            <person name="Swennen D."/>
            <person name="Tekaia F."/>
            <person name="Wesolowski-Louvel M."/>
            <person name="Westhof E."/>
            <person name="Wirth B."/>
            <person name="Zeniou-Meyer M."/>
            <person name="Zivanovic Y."/>
            <person name="Bolotin-Fukuhara M."/>
            <person name="Thierry A."/>
            <person name="Bouchier C."/>
            <person name="Caudron B."/>
            <person name="Scarpelli C."/>
            <person name="Gaillardin C."/>
            <person name="Weissenbach J."/>
            <person name="Wincker P."/>
            <person name="Souciet J.-L."/>
        </authorList>
    </citation>
    <scope>NUCLEOTIDE SEQUENCE [LARGE SCALE GENOMIC DNA]</scope>
    <source>
        <strain>ATCC 8585 / CBS 2359 / DSM 70799 / NBRC 1267 / NRRL Y-1140 / WM37</strain>
    </source>
</reference>
<evidence type="ECO:0000255" key="1">
    <source>
        <dbReference type="HAMAP-Rule" id="MF_03137"/>
    </source>
</evidence>
<evidence type="ECO:0000305" key="2"/>
<proteinExistence type="inferred from homology"/>
<feature type="transit peptide" description="Mitochondrion" evidence="1">
    <location>
        <begin position="1"/>
        <end position="19"/>
    </location>
</feature>
<feature type="chain" id="PRO_0000402886" description="Translation factor GUF1, mitochondrial">
    <location>
        <begin position="20"/>
        <end position="631"/>
    </location>
</feature>
<feature type="domain" description="tr-type G">
    <location>
        <begin position="33"/>
        <end position="214"/>
    </location>
</feature>
<feature type="binding site" evidence="1">
    <location>
        <begin position="42"/>
        <end position="49"/>
    </location>
    <ligand>
        <name>GTP</name>
        <dbReference type="ChEBI" id="CHEBI:37565"/>
    </ligand>
</feature>
<feature type="binding site" evidence="1">
    <location>
        <begin position="107"/>
        <end position="111"/>
    </location>
    <ligand>
        <name>GTP</name>
        <dbReference type="ChEBI" id="CHEBI:37565"/>
    </ligand>
</feature>
<feature type="binding site" evidence="1">
    <location>
        <begin position="161"/>
        <end position="164"/>
    </location>
    <ligand>
        <name>GTP</name>
        <dbReference type="ChEBI" id="CHEBI:37565"/>
    </ligand>
</feature>
<organism>
    <name type="scientific">Kluyveromyces lactis (strain ATCC 8585 / CBS 2359 / DSM 70799 / NBRC 1267 / NRRL Y-1140 / WM37)</name>
    <name type="common">Yeast</name>
    <name type="synonym">Candida sphaerica</name>
    <dbReference type="NCBI Taxonomy" id="284590"/>
    <lineage>
        <taxon>Eukaryota</taxon>
        <taxon>Fungi</taxon>
        <taxon>Dikarya</taxon>
        <taxon>Ascomycota</taxon>
        <taxon>Saccharomycotina</taxon>
        <taxon>Saccharomycetes</taxon>
        <taxon>Saccharomycetales</taxon>
        <taxon>Saccharomycetaceae</taxon>
        <taxon>Kluyveromyces</taxon>
    </lineage>
</organism>
<name>GUF1_KLULA</name>
<keyword id="KW-0342">GTP-binding</keyword>
<keyword id="KW-0378">Hydrolase</keyword>
<keyword id="KW-0472">Membrane</keyword>
<keyword id="KW-0496">Mitochondrion</keyword>
<keyword id="KW-0999">Mitochondrion inner membrane</keyword>
<keyword id="KW-0547">Nucleotide-binding</keyword>
<keyword id="KW-0648">Protein biosynthesis</keyword>
<keyword id="KW-1185">Reference proteome</keyword>
<keyword id="KW-0809">Transit peptide</keyword>
<dbReference type="EC" id="3.6.5.-"/>
<dbReference type="EMBL" id="CR382123">
    <property type="protein sequence ID" value="CAH01268.1"/>
    <property type="molecule type" value="Genomic_DNA"/>
</dbReference>
<dbReference type="RefSeq" id="XP_452417.1">
    <property type="nucleotide sequence ID" value="XM_452417.1"/>
</dbReference>
<dbReference type="SMR" id="Q6CUH2"/>
<dbReference type="FunCoup" id="Q6CUH2">
    <property type="interactions" value="749"/>
</dbReference>
<dbReference type="STRING" id="284590.Q6CUH2"/>
<dbReference type="PaxDb" id="284590-Q6CUH2"/>
<dbReference type="KEGG" id="kla:KLLA0_C04862g"/>
<dbReference type="eggNOG" id="KOG0462">
    <property type="taxonomic scope" value="Eukaryota"/>
</dbReference>
<dbReference type="HOGENOM" id="CLU_009995_3_1_1"/>
<dbReference type="InParanoid" id="Q6CUH2"/>
<dbReference type="OMA" id="QVKCDEN"/>
<dbReference type="Proteomes" id="UP000000598">
    <property type="component" value="Chromosome C"/>
</dbReference>
<dbReference type="GO" id="GO:0005743">
    <property type="term" value="C:mitochondrial inner membrane"/>
    <property type="evidence" value="ECO:0007669"/>
    <property type="project" value="UniProtKB-SubCell"/>
</dbReference>
<dbReference type="GO" id="GO:0005759">
    <property type="term" value="C:mitochondrial matrix"/>
    <property type="evidence" value="ECO:0007669"/>
    <property type="project" value="UniProtKB-UniRule"/>
</dbReference>
<dbReference type="GO" id="GO:0005525">
    <property type="term" value="F:GTP binding"/>
    <property type="evidence" value="ECO:0007669"/>
    <property type="project" value="UniProtKB-UniRule"/>
</dbReference>
<dbReference type="GO" id="GO:0003924">
    <property type="term" value="F:GTPase activity"/>
    <property type="evidence" value="ECO:0007669"/>
    <property type="project" value="UniProtKB-UniRule"/>
</dbReference>
<dbReference type="GO" id="GO:0097177">
    <property type="term" value="F:mitochondrial ribosome binding"/>
    <property type="evidence" value="ECO:0007669"/>
    <property type="project" value="TreeGrafter"/>
</dbReference>
<dbReference type="GO" id="GO:0045727">
    <property type="term" value="P:positive regulation of translation"/>
    <property type="evidence" value="ECO:0007669"/>
    <property type="project" value="UniProtKB-UniRule"/>
</dbReference>
<dbReference type="GO" id="GO:0006412">
    <property type="term" value="P:translation"/>
    <property type="evidence" value="ECO:0007669"/>
    <property type="project" value="UniProtKB-KW"/>
</dbReference>
<dbReference type="CDD" id="cd03699">
    <property type="entry name" value="EF4_II"/>
    <property type="match status" value="1"/>
</dbReference>
<dbReference type="CDD" id="cd16260">
    <property type="entry name" value="EF4_III"/>
    <property type="match status" value="1"/>
</dbReference>
<dbReference type="CDD" id="cd01890">
    <property type="entry name" value="LepA"/>
    <property type="match status" value="1"/>
</dbReference>
<dbReference type="CDD" id="cd03709">
    <property type="entry name" value="lepA_C"/>
    <property type="match status" value="1"/>
</dbReference>
<dbReference type="FunFam" id="3.40.50.300:FF:000078">
    <property type="entry name" value="Elongation factor 4"/>
    <property type="match status" value="1"/>
</dbReference>
<dbReference type="FunFam" id="2.40.30.10:FF:000015">
    <property type="entry name" value="Translation factor GUF1, mitochondrial"/>
    <property type="match status" value="1"/>
</dbReference>
<dbReference type="FunFam" id="3.30.70.240:FF:000007">
    <property type="entry name" value="Translation factor GUF1, mitochondrial"/>
    <property type="match status" value="1"/>
</dbReference>
<dbReference type="FunFam" id="3.30.70.2570:FF:000001">
    <property type="entry name" value="Translation factor GUF1, mitochondrial"/>
    <property type="match status" value="1"/>
</dbReference>
<dbReference type="FunFam" id="3.30.70.870:FF:000004">
    <property type="entry name" value="Translation factor GUF1, mitochondrial"/>
    <property type="match status" value="1"/>
</dbReference>
<dbReference type="Gene3D" id="3.30.70.240">
    <property type="match status" value="1"/>
</dbReference>
<dbReference type="Gene3D" id="3.30.70.2570">
    <property type="entry name" value="Elongation factor 4, C-terminal domain"/>
    <property type="match status" value="1"/>
</dbReference>
<dbReference type="Gene3D" id="3.30.70.870">
    <property type="entry name" value="Elongation Factor G (Translational Gtpase), domain 3"/>
    <property type="match status" value="1"/>
</dbReference>
<dbReference type="Gene3D" id="3.40.50.300">
    <property type="entry name" value="P-loop containing nucleotide triphosphate hydrolases"/>
    <property type="match status" value="1"/>
</dbReference>
<dbReference type="Gene3D" id="2.40.30.10">
    <property type="entry name" value="Translation factors"/>
    <property type="match status" value="1"/>
</dbReference>
<dbReference type="HAMAP" id="MF_00071">
    <property type="entry name" value="LepA"/>
    <property type="match status" value="1"/>
</dbReference>
<dbReference type="InterPro" id="IPR006297">
    <property type="entry name" value="EF-4"/>
</dbReference>
<dbReference type="InterPro" id="IPR035647">
    <property type="entry name" value="EFG_III/V"/>
</dbReference>
<dbReference type="InterPro" id="IPR000640">
    <property type="entry name" value="EFG_V-like"/>
</dbReference>
<dbReference type="InterPro" id="IPR031157">
    <property type="entry name" value="G_TR_CS"/>
</dbReference>
<dbReference type="InterPro" id="IPR038363">
    <property type="entry name" value="LepA_C_sf"/>
</dbReference>
<dbReference type="InterPro" id="IPR013842">
    <property type="entry name" value="LepA_CTD"/>
</dbReference>
<dbReference type="InterPro" id="IPR035654">
    <property type="entry name" value="LepA_IV"/>
</dbReference>
<dbReference type="InterPro" id="IPR027417">
    <property type="entry name" value="P-loop_NTPase"/>
</dbReference>
<dbReference type="InterPro" id="IPR005225">
    <property type="entry name" value="Small_GTP-bd"/>
</dbReference>
<dbReference type="InterPro" id="IPR000795">
    <property type="entry name" value="T_Tr_GTP-bd_dom"/>
</dbReference>
<dbReference type="InterPro" id="IPR009000">
    <property type="entry name" value="Transl_B-barrel_sf"/>
</dbReference>
<dbReference type="NCBIfam" id="TIGR01393">
    <property type="entry name" value="lepA"/>
    <property type="match status" value="1"/>
</dbReference>
<dbReference type="NCBIfam" id="TIGR00231">
    <property type="entry name" value="small_GTP"/>
    <property type="match status" value="1"/>
</dbReference>
<dbReference type="PANTHER" id="PTHR43512:SF7">
    <property type="entry name" value="TRANSLATION FACTOR GUF1, MITOCHONDRIAL"/>
    <property type="match status" value="1"/>
</dbReference>
<dbReference type="PANTHER" id="PTHR43512">
    <property type="entry name" value="TRANSLATION FACTOR GUF1-RELATED"/>
    <property type="match status" value="1"/>
</dbReference>
<dbReference type="Pfam" id="PF00679">
    <property type="entry name" value="EFG_C"/>
    <property type="match status" value="1"/>
</dbReference>
<dbReference type="Pfam" id="PF00009">
    <property type="entry name" value="GTP_EFTU"/>
    <property type="match status" value="1"/>
</dbReference>
<dbReference type="Pfam" id="PF06421">
    <property type="entry name" value="LepA_C"/>
    <property type="match status" value="1"/>
</dbReference>
<dbReference type="PRINTS" id="PR00315">
    <property type="entry name" value="ELONGATNFCT"/>
</dbReference>
<dbReference type="SUPFAM" id="SSF54980">
    <property type="entry name" value="EF-G C-terminal domain-like"/>
    <property type="match status" value="2"/>
</dbReference>
<dbReference type="SUPFAM" id="SSF52540">
    <property type="entry name" value="P-loop containing nucleoside triphosphate hydrolases"/>
    <property type="match status" value="1"/>
</dbReference>
<dbReference type="SUPFAM" id="SSF50447">
    <property type="entry name" value="Translation proteins"/>
    <property type="match status" value="1"/>
</dbReference>
<dbReference type="PROSITE" id="PS00301">
    <property type="entry name" value="G_TR_1"/>
    <property type="match status" value="1"/>
</dbReference>
<dbReference type="PROSITE" id="PS51722">
    <property type="entry name" value="G_TR_2"/>
    <property type="match status" value="1"/>
</dbReference>
<comment type="function">
    <text evidence="1">Promotes mitochondrial protein synthesis. May act as a fidelity factor of the translation reaction, by catalyzing a one-codon backward translocation of tRNAs on improperly translocated ribosomes. Binds to mitochondrial ribosomes in a GTP-dependent manner.</text>
</comment>
<comment type="catalytic activity">
    <reaction evidence="1">
        <text>GTP + H2O = GDP + phosphate + H(+)</text>
        <dbReference type="Rhea" id="RHEA:19669"/>
        <dbReference type="ChEBI" id="CHEBI:15377"/>
        <dbReference type="ChEBI" id="CHEBI:15378"/>
        <dbReference type="ChEBI" id="CHEBI:37565"/>
        <dbReference type="ChEBI" id="CHEBI:43474"/>
        <dbReference type="ChEBI" id="CHEBI:58189"/>
    </reaction>
</comment>
<comment type="subcellular location">
    <subcellularLocation>
        <location evidence="1">Mitochondrion inner membrane</location>
        <topology evidence="1">Peripheral membrane protein</topology>
        <orientation evidence="1">Matrix side</orientation>
    </subcellularLocation>
</comment>
<comment type="similarity">
    <text evidence="2">Belongs to the TRAFAC class translation factor GTPase superfamily. Classic translation factor GTPase family. LepA subfamily.</text>
</comment>
<gene>
    <name evidence="1" type="primary">GUF1</name>
    <name type="ordered locus">KLLA0C04862g</name>
</gene>
<sequence length="631" mass="71339">MFNRRLLRHVRYAFQQVRSNHSLQERIDAIPIERYRNFSIVAHVDHGKSTLSDRLLELTNVIKPGGKQVLDKLEVERERGITIKAQTCSMFYQDPRTKLDYLLHLVDTPGHVDFRAEVSRSYASCGGALLLVDASQGVQAQTVANFYLAYSMDLKLIPVINKIDLDIADIDQAEEQVENMFELPKSDCIKVSAKTGLHVEQLLPAIVDRIPPPTGKVEKPLRALLVDSWYDSYLGVVLLVHIVDGQVKRGDKIITAANGLKYEVRECGIMYPDRVATNTLKSGQVGYLVPGMKESKDAKIGDTLMHLGKESITEVLPGFEEPKPMVFVGAFPADGAEFKALDDDISRLVLNDRSVSLQRETSNALGQGWRLGFLGSLHASVFTERLEKEYGSKLILTQPTVPFLIKFKDGEKKIITNPDDFPDLSLRRSNLESLEEPFVEAIMTLPQEYLGKVIQLCDDSHGVQKEITYLNMTGQVMLRYELPLSYLVDDFFGKLKSVSRGYASLDYEDVGYKQSDIVKLELLVNGKSVDALAQVMHRDQTEHIGKEWVKKFKKFIKSQLFEVVIQARANNKIIARETIKAKRKDVLSKLHASDISRRKKLLSKQKQGKKNMKTVGNIQINQDAFQSFLRR</sequence>
<accession>Q6CUH2</accession>
<protein>
    <recommendedName>
        <fullName evidence="1">Translation factor GUF1, mitochondrial</fullName>
        <ecNumber>3.6.5.-</ecNumber>
    </recommendedName>
    <alternativeName>
        <fullName evidence="1">Elongation factor 4 homolog</fullName>
        <shortName evidence="1">EF-4</shortName>
    </alternativeName>
    <alternativeName>
        <fullName evidence="1">GTPase GUF1</fullName>
    </alternativeName>
    <alternativeName>
        <fullName evidence="1">Ribosomal back-translocase</fullName>
    </alternativeName>
</protein>